<sequence length="198" mass="21510">MIEFVYPHTQLVAGVDEVGRGPLVGAVVTAAVILDPARPIAGLNDSKKLSEKRRLVLCEEIKEKALSWSLGRAEPHEIDELNILHATMLAMQRAVAGLHIAPEYVLIDGNRCPKLPMPSMAVVKGDSRVPEISAASILAKVTRDAEMAALDIVFPQYGFAQHKGYPTAFHLEKLAEHGATEHHRRSFGPVKRALGLAS</sequence>
<protein>
    <recommendedName>
        <fullName evidence="1">Ribonuclease HII</fullName>
        <shortName evidence="1">RNase HII</shortName>
        <ecNumber evidence="1">3.1.26.4</ecNumber>
    </recommendedName>
</protein>
<gene>
    <name evidence="1" type="primary">rnhB</name>
    <name type="ordered locus">ECS88_0194</name>
</gene>
<proteinExistence type="inferred from homology"/>
<name>RNH2_ECO45</name>
<keyword id="KW-0963">Cytoplasm</keyword>
<keyword id="KW-0255">Endonuclease</keyword>
<keyword id="KW-0378">Hydrolase</keyword>
<keyword id="KW-0464">Manganese</keyword>
<keyword id="KW-0479">Metal-binding</keyword>
<keyword id="KW-0540">Nuclease</keyword>
<keyword id="KW-1185">Reference proteome</keyword>
<feature type="chain" id="PRO_1000116843" description="Ribonuclease HII">
    <location>
        <begin position="1"/>
        <end position="198"/>
    </location>
</feature>
<feature type="domain" description="RNase H type-2" evidence="2">
    <location>
        <begin position="10"/>
        <end position="198"/>
    </location>
</feature>
<feature type="binding site" evidence="1">
    <location>
        <position position="16"/>
    </location>
    <ligand>
        <name>a divalent metal cation</name>
        <dbReference type="ChEBI" id="CHEBI:60240"/>
    </ligand>
</feature>
<feature type="binding site" evidence="1">
    <location>
        <position position="17"/>
    </location>
    <ligand>
        <name>a divalent metal cation</name>
        <dbReference type="ChEBI" id="CHEBI:60240"/>
    </ligand>
</feature>
<feature type="binding site" evidence="1">
    <location>
        <position position="108"/>
    </location>
    <ligand>
        <name>a divalent metal cation</name>
        <dbReference type="ChEBI" id="CHEBI:60240"/>
    </ligand>
</feature>
<evidence type="ECO:0000255" key="1">
    <source>
        <dbReference type="HAMAP-Rule" id="MF_00052"/>
    </source>
</evidence>
<evidence type="ECO:0000255" key="2">
    <source>
        <dbReference type="PROSITE-ProRule" id="PRU01319"/>
    </source>
</evidence>
<reference key="1">
    <citation type="journal article" date="2009" name="PLoS Genet.">
        <title>Organised genome dynamics in the Escherichia coli species results in highly diverse adaptive paths.</title>
        <authorList>
            <person name="Touchon M."/>
            <person name="Hoede C."/>
            <person name="Tenaillon O."/>
            <person name="Barbe V."/>
            <person name="Baeriswyl S."/>
            <person name="Bidet P."/>
            <person name="Bingen E."/>
            <person name="Bonacorsi S."/>
            <person name="Bouchier C."/>
            <person name="Bouvet O."/>
            <person name="Calteau A."/>
            <person name="Chiapello H."/>
            <person name="Clermont O."/>
            <person name="Cruveiller S."/>
            <person name="Danchin A."/>
            <person name="Diard M."/>
            <person name="Dossat C."/>
            <person name="Karoui M.E."/>
            <person name="Frapy E."/>
            <person name="Garry L."/>
            <person name="Ghigo J.M."/>
            <person name="Gilles A.M."/>
            <person name="Johnson J."/>
            <person name="Le Bouguenec C."/>
            <person name="Lescat M."/>
            <person name="Mangenot S."/>
            <person name="Martinez-Jehanne V."/>
            <person name="Matic I."/>
            <person name="Nassif X."/>
            <person name="Oztas S."/>
            <person name="Petit M.A."/>
            <person name="Pichon C."/>
            <person name="Rouy Z."/>
            <person name="Ruf C.S."/>
            <person name="Schneider D."/>
            <person name="Tourret J."/>
            <person name="Vacherie B."/>
            <person name="Vallenet D."/>
            <person name="Medigue C."/>
            <person name="Rocha E.P.C."/>
            <person name="Denamur E."/>
        </authorList>
    </citation>
    <scope>NUCLEOTIDE SEQUENCE [LARGE SCALE GENOMIC DNA]</scope>
    <source>
        <strain>S88 / ExPEC</strain>
    </source>
</reference>
<dbReference type="EC" id="3.1.26.4" evidence="1"/>
<dbReference type="EMBL" id="CU928161">
    <property type="protein sequence ID" value="CAR01558.1"/>
    <property type="molecule type" value="Genomic_DNA"/>
</dbReference>
<dbReference type="RefSeq" id="WP_000569434.1">
    <property type="nucleotide sequence ID" value="NC_011742.1"/>
</dbReference>
<dbReference type="SMR" id="B7MBG4"/>
<dbReference type="KEGG" id="ecz:ECS88_0194"/>
<dbReference type="HOGENOM" id="CLU_036532_3_2_6"/>
<dbReference type="Proteomes" id="UP000000747">
    <property type="component" value="Chromosome"/>
</dbReference>
<dbReference type="GO" id="GO:0005737">
    <property type="term" value="C:cytoplasm"/>
    <property type="evidence" value="ECO:0007669"/>
    <property type="project" value="UniProtKB-SubCell"/>
</dbReference>
<dbReference type="GO" id="GO:0032299">
    <property type="term" value="C:ribonuclease H2 complex"/>
    <property type="evidence" value="ECO:0007669"/>
    <property type="project" value="TreeGrafter"/>
</dbReference>
<dbReference type="GO" id="GO:0030145">
    <property type="term" value="F:manganese ion binding"/>
    <property type="evidence" value="ECO:0007669"/>
    <property type="project" value="UniProtKB-UniRule"/>
</dbReference>
<dbReference type="GO" id="GO:0003723">
    <property type="term" value="F:RNA binding"/>
    <property type="evidence" value="ECO:0007669"/>
    <property type="project" value="InterPro"/>
</dbReference>
<dbReference type="GO" id="GO:0004523">
    <property type="term" value="F:RNA-DNA hybrid ribonuclease activity"/>
    <property type="evidence" value="ECO:0007669"/>
    <property type="project" value="UniProtKB-UniRule"/>
</dbReference>
<dbReference type="GO" id="GO:0043137">
    <property type="term" value="P:DNA replication, removal of RNA primer"/>
    <property type="evidence" value="ECO:0007669"/>
    <property type="project" value="TreeGrafter"/>
</dbReference>
<dbReference type="GO" id="GO:0006298">
    <property type="term" value="P:mismatch repair"/>
    <property type="evidence" value="ECO:0007669"/>
    <property type="project" value="TreeGrafter"/>
</dbReference>
<dbReference type="CDD" id="cd07182">
    <property type="entry name" value="RNase_HII_bacteria_HII_like"/>
    <property type="match status" value="1"/>
</dbReference>
<dbReference type="FunFam" id="3.30.420.10:FF:000006">
    <property type="entry name" value="Ribonuclease HII"/>
    <property type="match status" value="1"/>
</dbReference>
<dbReference type="Gene3D" id="3.30.420.10">
    <property type="entry name" value="Ribonuclease H-like superfamily/Ribonuclease H"/>
    <property type="match status" value="1"/>
</dbReference>
<dbReference type="HAMAP" id="MF_00052_B">
    <property type="entry name" value="RNase_HII_B"/>
    <property type="match status" value="1"/>
</dbReference>
<dbReference type="InterPro" id="IPR022898">
    <property type="entry name" value="RNase_HII"/>
</dbReference>
<dbReference type="InterPro" id="IPR001352">
    <property type="entry name" value="RNase_HII/HIII"/>
</dbReference>
<dbReference type="InterPro" id="IPR024567">
    <property type="entry name" value="RNase_HII/HIII_dom"/>
</dbReference>
<dbReference type="InterPro" id="IPR012337">
    <property type="entry name" value="RNaseH-like_sf"/>
</dbReference>
<dbReference type="InterPro" id="IPR036397">
    <property type="entry name" value="RNaseH_sf"/>
</dbReference>
<dbReference type="NCBIfam" id="NF000594">
    <property type="entry name" value="PRK00015.1-1"/>
    <property type="match status" value="1"/>
</dbReference>
<dbReference type="NCBIfam" id="NF000595">
    <property type="entry name" value="PRK00015.1-3"/>
    <property type="match status" value="1"/>
</dbReference>
<dbReference type="NCBIfam" id="NF000596">
    <property type="entry name" value="PRK00015.1-4"/>
    <property type="match status" value="1"/>
</dbReference>
<dbReference type="PANTHER" id="PTHR10954">
    <property type="entry name" value="RIBONUCLEASE H2 SUBUNIT A"/>
    <property type="match status" value="1"/>
</dbReference>
<dbReference type="PANTHER" id="PTHR10954:SF18">
    <property type="entry name" value="RIBONUCLEASE HII"/>
    <property type="match status" value="1"/>
</dbReference>
<dbReference type="Pfam" id="PF01351">
    <property type="entry name" value="RNase_HII"/>
    <property type="match status" value="1"/>
</dbReference>
<dbReference type="SUPFAM" id="SSF53098">
    <property type="entry name" value="Ribonuclease H-like"/>
    <property type="match status" value="1"/>
</dbReference>
<dbReference type="PROSITE" id="PS51975">
    <property type="entry name" value="RNASE_H_2"/>
    <property type="match status" value="1"/>
</dbReference>
<comment type="function">
    <text evidence="1">Endonuclease that specifically degrades the RNA of RNA-DNA hybrids.</text>
</comment>
<comment type="catalytic activity">
    <reaction evidence="1">
        <text>Endonucleolytic cleavage to 5'-phosphomonoester.</text>
        <dbReference type="EC" id="3.1.26.4"/>
    </reaction>
</comment>
<comment type="cofactor">
    <cofactor evidence="1">
        <name>Mn(2+)</name>
        <dbReference type="ChEBI" id="CHEBI:29035"/>
    </cofactor>
    <cofactor evidence="1">
        <name>Mg(2+)</name>
        <dbReference type="ChEBI" id="CHEBI:18420"/>
    </cofactor>
    <text evidence="1">Manganese or magnesium. Binds 1 divalent metal ion per monomer in the absence of substrate. May bind a second metal ion after substrate binding.</text>
</comment>
<comment type="subcellular location">
    <subcellularLocation>
        <location evidence="1">Cytoplasm</location>
    </subcellularLocation>
</comment>
<comment type="similarity">
    <text evidence="1">Belongs to the RNase HII family.</text>
</comment>
<accession>B7MBG4</accession>
<organism>
    <name type="scientific">Escherichia coli O45:K1 (strain S88 / ExPEC)</name>
    <dbReference type="NCBI Taxonomy" id="585035"/>
    <lineage>
        <taxon>Bacteria</taxon>
        <taxon>Pseudomonadati</taxon>
        <taxon>Pseudomonadota</taxon>
        <taxon>Gammaproteobacteria</taxon>
        <taxon>Enterobacterales</taxon>
        <taxon>Enterobacteriaceae</taxon>
        <taxon>Escherichia</taxon>
    </lineage>
</organism>